<feature type="chain" id="PRO_1000124657" description="Probable manganese-dependent inorganic pyrophosphatase">
    <location>
        <begin position="1"/>
        <end position="308"/>
    </location>
</feature>
<feature type="binding site" evidence="1">
    <location>
        <position position="9"/>
    </location>
    <ligand>
        <name>Mn(2+)</name>
        <dbReference type="ChEBI" id="CHEBI:29035"/>
        <label>1</label>
    </ligand>
</feature>
<feature type="binding site" evidence="1">
    <location>
        <position position="13"/>
    </location>
    <ligand>
        <name>Mn(2+)</name>
        <dbReference type="ChEBI" id="CHEBI:29035"/>
        <label>1</label>
    </ligand>
</feature>
<feature type="binding site" evidence="1">
    <location>
        <position position="15"/>
    </location>
    <ligand>
        <name>Mn(2+)</name>
        <dbReference type="ChEBI" id="CHEBI:29035"/>
        <label>2</label>
    </ligand>
</feature>
<feature type="binding site" evidence="1">
    <location>
        <position position="75"/>
    </location>
    <ligand>
        <name>Mn(2+)</name>
        <dbReference type="ChEBI" id="CHEBI:29035"/>
        <label>1</label>
    </ligand>
</feature>
<feature type="binding site" evidence="1">
    <location>
        <position position="75"/>
    </location>
    <ligand>
        <name>Mn(2+)</name>
        <dbReference type="ChEBI" id="CHEBI:29035"/>
        <label>2</label>
    </ligand>
</feature>
<feature type="binding site" evidence="1">
    <location>
        <position position="97"/>
    </location>
    <ligand>
        <name>Mn(2+)</name>
        <dbReference type="ChEBI" id="CHEBI:29035"/>
        <label>2</label>
    </ligand>
</feature>
<feature type="binding site" evidence="1">
    <location>
        <position position="149"/>
    </location>
    <ligand>
        <name>Mn(2+)</name>
        <dbReference type="ChEBI" id="CHEBI:29035"/>
        <label>2</label>
    </ligand>
</feature>
<sequence>MESTYIFGHKSPDTDAINSAIIMAEFEKLNGNDSAKAYRLGKVNPETQYALDYFKAEAPELLTEDLTDKDVILVDHNEFQQSADTIESAKIRHVVDHHRIANFHTAAPLYYRAEPLGCTATILYKMFKEQGFEIKPQIASLMLSAIISDSLLFKSPTCTEQDKAAAQALENIAGVDAQEYGLEMLKAGASTVDKSPVEIINADAKTFNMGDYSVRIGQVNTVDVNEILARQAELEQAITETLSGAEYDIFVLVATDILNSDSTILVLGKDKDKIAKAFDVELDNNTAFLPGVVSRKKQIVPPITAALS</sequence>
<keyword id="KW-0963">Cytoplasm</keyword>
<keyword id="KW-0378">Hydrolase</keyword>
<keyword id="KW-0464">Manganese</keyword>
<keyword id="KW-0479">Metal-binding</keyword>
<keyword id="KW-1185">Reference proteome</keyword>
<reference key="1">
    <citation type="journal article" date="2009" name="Appl. Environ. Microbiol.">
        <title>Genome analysis of the meat starter culture bacterium Staphylococcus carnosus TM300.</title>
        <authorList>
            <person name="Rosenstein R."/>
            <person name="Nerz C."/>
            <person name="Biswas L."/>
            <person name="Resch A."/>
            <person name="Raddatz G."/>
            <person name="Schuster S.C."/>
            <person name="Goetz F."/>
        </authorList>
    </citation>
    <scope>NUCLEOTIDE SEQUENCE [LARGE SCALE GENOMIC DNA]</scope>
    <source>
        <strain>TM300</strain>
    </source>
</reference>
<name>PPAC_STACT</name>
<accession>B9DMR8</accession>
<proteinExistence type="inferred from homology"/>
<dbReference type="EC" id="3.6.1.1" evidence="1"/>
<dbReference type="EMBL" id="AM295250">
    <property type="protein sequence ID" value="CAL28396.1"/>
    <property type="molecule type" value="Genomic_DNA"/>
</dbReference>
<dbReference type="RefSeq" id="WP_015900736.1">
    <property type="nucleotide sequence ID" value="NC_012121.1"/>
</dbReference>
<dbReference type="SMR" id="B9DMR8"/>
<dbReference type="GeneID" id="93793945"/>
<dbReference type="KEGG" id="sca:SCA_1491"/>
<dbReference type="eggNOG" id="COG1227">
    <property type="taxonomic scope" value="Bacteria"/>
</dbReference>
<dbReference type="HOGENOM" id="CLU_025243_0_1_9"/>
<dbReference type="OrthoDB" id="9766150at2"/>
<dbReference type="BioCyc" id="SCAR396513:SCA_RS07570-MONOMER"/>
<dbReference type="Proteomes" id="UP000000444">
    <property type="component" value="Chromosome"/>
</dbReference>
<dbReference type="GO" id="GO:0005737">
    <property type="term" value="C:cytoplasm"/>
    <property type="evidence" value="ECO:0007669"/>
    <property type="project" value="UniProtKB-SubCell"/>
</dbReference>
<dbReference type="GO" id="GO:0004427">
    <property type="term" value="F:inorganic diphosphate phosphatase activity"/>
    <property type="evidence" value="ECO:0007669"/>
    <property type="project" value="UniProtKB-UniRule"/>
</dbReference>
<dbReference type="GO" id="GO:0030145">
    <property type="term" value="F:manganese ion binding"/>
    <property type="evidence" value="ECO:0007669"/>
    <property type="project" value="UniProtKB-UniRule"/>
</dbReference>
<dbReference type="FunFam" id="3.10.310.20:FF:000001">
    <property type="entry name" value="Probable manganese-dependent inorganic pyrophosphatase"/>
    <property type="match status" value="1"/>
</dbReference>
<dbReference type="FunFam" id="3.90.1640.10:FF:000001">
    <property type="entry name" value="Probable manganese-dependent inorganic pyrophosphatase"/>
    <property type="match status" value="1"/>
</dbReference>
<dbReference type="Gene3D" id="3.10.310.20">
    <property type="entry name" value="DHHA2 domain"/>
    <property type="match status" value="1"/>
</dbReference>
<dbReference type="Gene3D" id="3.90.1640.10">
    <property type="entry name" value="inorganic pyrophosphatase (n-terminal core)"/>
    <property type="match status" value="1"/>
</dbReference>
<dbReference type="HAMAP" id="MF_00207">
    <property type="entry name" value="PPase_C"/>
    <property type="match status" value="1"/>
</dbReference>
<dbReference type="InterPro" id="IPR001667">
    <property type="entry name" value="DDH_dom"/>
</dbReference>
<dbReference type="InterPro" id="IPR038763">
    <property type="entry name" value="DHH_sf"/>
</dbReference>
<dbReference type="InterPro" id="IPR004097">
    <property type="entry name" value="DHHA2"/>
</dbReference>
<dbReference type="InterPro" id="IPR038222">
    <property type="entry name" value="DHHA2_dom_sf"/>
</dbReference>
<dbReference type="InterPro" id="IPR022934">
    <property type="entry name" value="Mn-dep_inorganic_PyrPase"/>
</dbReference>
<dbReference type="InterPro" id="IPR051319">
    <property type="entry name" value="Oligoribo/pAp-PDE_c-di-AMP_PDE"/>
</dbReference>
<dbReference type="NCBIfam" id="NF003877">
    <property type="entry name" value="PRK05427.1"/>
    <property type="match status" value="1"/>
</dbReference>
<dbReference type="PANTHER" id="PTHR47618">
    <property type="entry name" value="BIFUNCTIONAL OLIGORIBONUCLEASE AND PAP PHOSPHATASE NRNA"/>
    <property type="match status" value="1"/>
</dbReference>
<dbReference type="PANTHER" id="PTHR47618:SF1">
    <property type="entry name" value="BIFUNCTIONAL OLIGORIBONUCLEASE AND PAP PHOSPHATASE NRNA"/>
    <property type="match status" value="1"/>
</dbReference>
<dbReference type="Pfam" id="PF01368">
    <property type="entry name" value="DHH"/>
    <property type="match status" value="1"/>
</dbReference>
<dbReference type="Pfam" id="PF02833">
    <property type="entry name" value="DHHA2"/>
    <property type="match status" value="1"/>
</dbReference>
<dbReference type="SMART" id="SM01131">
    <property type="entry name" value="DHHA2"/>
    <property type="match status" value="1"/>
</dbReference>
<dbReference type="SUPFAM" id="SSF64182">
    <property type="entry name" value="DHH phosphoesterases"/>
    <property type="match status" value="1"/>
</dbReference>
<gene>
    <name evidence="1" type="primary">ppaC</name>
    <name type="ordered locus">Sca_1491</name>
</gene>
<protein>
    <recommendedName>
        <fullName evidence="1">Probable manganese-dependent inorganic pyrophosphatase</fullName>
        <ecNumber evidence="1">3.6.1.1</ecNumber>
    </recommendedName>
    <alternativeName>
        <fullName evidence="1">Pyrophosphate phospho-hydrolase</fullName>
        <shortName evidence="1">PPase</shortName>
    </alternativeName>
</protein>
<comment type="catalytic activity">
    <reaction evidence="1">
        <text>diphosphate + H2O = 2 phosphate + H(+)</text>
        <dbReference type="Rhea" id="RHEA:24576"/>
        <dbReference type="ChEBI" id="CHEBI:15377"/>
        <dbReference type="ChEBI" id="CHEBI:15378"/>
        <dbReference type="ChEBI" id="CHEBI:33019"/>
        <dbReference type="ChEBI" id="CHEBI:43474"/>
        <dbReference type="EC" id="3.6.1.1"/>
    </reaction>
</comment>
<comment type="cofactor">
    <cofactor evidence="1">
        <name>Mn(2+)</name>
        <dbReference type="ChEBI" id="CHEBI:29035"/>
    </cofactor>
    <text evidence="1">Binds 2 manganese ions per subunit.</text>
</comment>
<comment type="subcellular location">
    <subcellularLocation>
        <location evidence="1">Cytoplasm</location>
    </subcellularLocation>
</comment>
<comment type="similarity">
    <text evidence="1">Belongs to the PPase class C family.</text>
</comment>
<evidence type="ECO:0000255" key="1">
    <source>
        <dbReference type="HAMAP-Rule" id="MF_00207"/>
    </source>
</evidence>
<organism>
    <name type="scientific">Staphylococcus carnosus (strain TM300)</name>
    <dbReference type="NCBI Taxonomy" id="396513"/>
    <lineage>
        <taxon>Bacteria</taxon>
        <taxon>Bacillati</taxon>
        <taxon>Bacillota</taxon>
        <taxon>Bacilli</taxon>
        <taxon>Bacillales</taxon>
        <taxon>Staphylococcaceae</taxon>
        <taxon>Staphylococcus</taxon>
    </lineage>
</organism>